<proteinExistence type="evidence at protein level"/>
<accession>Q3U319</accession>
<accession>Q6ZQ75</accession>
<accession>Q8BJA1</accession>
<accession>Q8BY03</accession>
<accession>Q8CHX4</accession>
<comment type="function">
    <text evidence="1">Component of the RNF20/40 E3 ubiquitin-protein ligase complex that mediates monoubiquitination of 'Lys-120' of histone H2B (H2BK120ub1). H2BK120ub1 gives a specific tag for epigenetic transcriptional activation and is also prerequisite for histone H3 'Lys-4' and 'Lys-79' methylation (H3K4me and H3K79me, respectively). It thereby plays a central role in histone code and gene regulation. The RNF20/40 complex forms a H2B ubiquitin ligase complex in cooperation with the E2 enzyme UBE2A or UBE2B; reports about the cooperation with UBE2E1/UBCH are contradictory. Required for transcriptional activation of Hox genes.</text>
</comment>
<comment type="catalytic activity">
    <reaction evidence="1">
        <text>S-ubiquitinyl-[E2 ubiquitin-conjugating enzyme]-L-cysteine + [acceptor protein]-L-lysine = [E2 ubiquitin-conjugating enzyme]-L-cysteine + N(6)-ubiquitinyl-[acceptor protein]-L-lysine.</text>
        <dbReference type="EC" id="2.3.2.27"/>
    </reaction>
</comment>
<comment type="pathway">
    <text>Protein modification; protein ubiquitination.</text>
</comment>
<comment type="subunit">
    <text evidence="1">Component of the RNF20/40 complex (also known as BRE1 complex) probably composed of 2 copies of RNF20/BRE1A and 2 copies of RNF40/BRE1B. Interacts with UBE2E1/UBCH6. Interacts with RB1 and WAC.</text>
</comment>
<comment type="subcellular location">
    <subcellularLocation>
        <location evidence="1">Nucleus</location>
    </subcellularLocation>
</comment>
<comment type="similarity">
    <text evidence="6">Belongs to the BRE1 family.</text>
</comment>
<comment type="sequence caution" evidence="6">
    <conflict type="erroneous initiation">
        <sequence resource="EMBL-CDS" id="BAC97994"/>
    </conflict>
</comment>
<feature type="chain" id="PRO_0000055841" description="E3 ubiquitin-protein ligase BRE1B">
    <location>
        <begin position="1"/>
        <end position="1001"/>
    </location>
</feature>
<feature type="zinc finger region" description="RING-type" evidence="4">
    <location>
        <begin position="948"/>
        <end position="987"/>
    </location>
</feature>
<feature type="region of interest" description="Disordered" evidence="5">
    <location>
        <begin position="1"/>
        <end position="40"/>
    </location>
</feature>
<feature type="region of interest" description="Disordered" evidence="5">
    <location>
        <begin position="122"/>
        <end position="142"/>
    </location>
</feature>
<feature type="region of interest" description="Disordered" evidence="5">
    <location>
        <begin position="519"/>
        <end position="647"/>
    </location>
</feature>
<feature type="coiled-coil region" evidence="3">
    <location>
        <begin position="55"/>
        <end position="91"/>
    </location>
</feature>
<feature type="coiled-coil region" evidence="3">
    <location>
        <begin position="189"/>
        <end position="377"/>
    </location>
</feature>
<feature type="coiled-coil region" evidence="3">
    <location>
        <begin position="437"/>
        <end position="525"/>
    </location>
</feature>
<feature type="coiled-coil region" evidence="3">
    <location>
        <begin position="627"/>
        <end position="946"/>
    </location>
</feature>
<feature type="compositionally biased region" description="Basic and acidic residues" evidence="5">
    <location>
        <begin position="18"/>
        <end position="28"/>
    </location>
</feature>
<feature type="compositionally biased region" description="Low complexity" evidence="5">
    <location>
        <begin position="565"/>
        <end position="576"/>
    </location>
</feature>
<feature type="compositionally biased region" description="Basic and acidic residues" evidence="5">
    <location>
        <begin position="602"/>
        <end position="619"/>
    </location>
</feature>
<feature type="compositionally biased region" description="Basic and acidic residues" evidence="5">
    <location>
        <begin position="633"/>
        <end position="647"/>
    </location>
</feature>
<feature type="modified residue" description="N6-acetyllysine" evidence="8">
    <location>
        <position position="20"/>
    </location>
</feature>
<feature type="modified residue" description="Phosphoserine" evidence="2">
    <location>
        <position position="42"/>
    </location>
</feature>
<feature type="modified residue" description="N6-acetyllysine" evidence="2">
    <location>
        <position position="355"/>
    </location>
</feature>
<feature type="modified residue" description="N6-acetyllysine" evidence="8">
    <location>
        <position position="517"/>
    </location>
</feature>
<feature type="modified residue" description="Phosphoserine" evidence="7">
    <location>
        <position position="584"/>
    </location>
</feature>
<feature type="modified residue" description="Phosphoserine" evidence="7">
    <location>
        <position position="585"/>
    </location>
</feature>
<feature type="cross-link" description="Glycyl lysine isopeptide (Lys-Gly) (interchain with G-Cter in SUMO2)" evidence="1">
    <location>
        <position position="578"/>
    </location>
</feature>
<feature type="cross-link" description="Glycyl lysine isopeptide (Lys-Gly) (interchain with G-Cter in SUMO2)" evidence="1">
    <location>
        <position position="579"/>
    </location>
</feature>
<feature type="sequence conflict" description="In Ref. 2; BAE32971." evidence="6" ref="2">
    <original>T</original>
    <variation>A</variation>
    <location>
        <position position="385"/>
    </location>
</feature>
<feature type="sequence conflict" description="In Ref. 3; AAH38348." evidence="6" ref="3">
    <original>H</original>
    <variation>Y</variation>
    <location>
        <position position="493"/>
    </location>
</feature>
<protein>
    <recommendedName>
        <fullName>E3 ubiquitin-protein ligase BRE1B</fullName>
        <shortName>BRE1-B</shortName>
        <ecNumber evidence="1">2.3.2.27</ecNumber>
    </recommendedName>
    <alternativeName>
        <fullName>RING finger protein 40</fullName>
    </alternativeName>
    <alternativeName>
        <fullName evidence="6">RING-type E3 ubiquitin transferase BRE1B</fullName>
    </alternativeName>
</protein>
<keyword id="KW-0007">Acetylation</keyword>
<keyword id="KW-0156">Chromatin regulator</keyword>
<keyword id="KW-0175">Coiled coil</keyword>
<keyword id="KW-1017">Isopeptide bond</keyword>
<keyword id="KW-0479">Metal-binding</keyword>
<keyword id="KW-0539">Nucleus</keyword>
<keyword id="KW-0597">Phosphoprotein</keyword>
<keyword id="KW-1185">Reference proteome</keyword>
<keyword id="KW-0808">Transferase</keyword>
<keyword id="KW-0832">Ubl conjugation</keyword>
<keyword id="KW-0833">Ubl conjugation pathway</keyword>
<keyword id="KW-0862">Zinc</keyword>
<keyword id="KW-0863">Zinc-finger</keyword>
<sequence>MSGLSNKRAAGDGGSGPPEKKMNREEKTTTTLIEPIRLGGISSTEEMDSKVLQFKNKKLAERLEQRQACEDELRERIEKLEKRQATDDATLLIVNRYWAQLDETVEALLQCYENQRELSSGTEVPGCQEGLTRDVIPRPDPGTSDLREPLPVQFRAPLSEPALAFVVALGASSCEEVELQLQGRMEFSKAAVSRVVEASDRLQRQVEELCQRVYSRGDSEAPGEVARVRTRELGRENRRLQDLATQLQEKHHRISLEYSELQDKVTSTETKVLEMETTVEDLQWDIEKLRKREQKLNKHLAEALEQLNSGYYVSGSSTGFQGGQITLSMQKFEMLNAELEENQELANSRMAELEKLQAELQGAVRTNERLKVALRSLPEEVVRETGEYRMLQAQFSLLYNESLQVKTQLDEARGLLLASKNSHLRHIEHMESDELGLQKKLRTEVIQLEDTLAQVRKEYEMLRIEFEQNLAANEQAGPINREMRHLISSLQNHNHQLKGDAQRYKRKLREVQAEIGKLRAQASGSSHCIPTLSHPDDPGLNALAPGKEDSGPGPGGTPDCKKEMALLAGATSATSSIKKEELVSSEDDAQALTPVTQGLPSRGREPEARPKRELREREGPSLGPPPAASTLSRADREKAKVEEAKRKESELLKGLRAELKKAQESQKEMKLLLDMYKSAPKEQRDKVQLMAAERKAKAEVDELRSRIRELEERDRRESKKIADEDALRRIRQAEEQIEHLQRKLGATKQEEEALLSEMDVTGQAFEDMQEQNGRLLQQLREKDDANFKLMSERIKANQIHKLLREEKDELGEQVLGLKSQVDAQLLTVQKLEEKERALQGSLGGVEKELTLRSQALELNKRKAVEAAQLAEDLKVQLEHVQTRLREIQPCLAESRAAREKESFNLKRAQEDISRLRRKLEKQRKVEVYADADEILQEEIKEYKARLTCPCCNTRKKDAVLTKCFHVFCFECVRGRYEARQRKCPKCNAAFGAHDFHRVYIS</sequence>
<name>BRE1B_MOUSE</name>
<organism>
    <name type="scientific">Mus musculus</name>
    <name type="common">Mouse</name>
    <dbReference type="NCBI Taxonomy" id="10090"/>
    <lineage>
        <taxon>Eukaryota</taxon>
        <taxon>Metazoa</taxon>
        <taxon>Chordata</taxon>
        <taxon>Craniata</taxon>
        <taxon>Vertebrata</taxon>
        <taxon>Euteleostomi</taxon>
        <taxon>Mammalia</taxon>
        <taxon>Eutheria</taxon>
        <taxon>Euarchontoglires</taxon>
        <taxon>Glires</taxon>
        <taxon>Rodentia</taxon>
        <taxon>Myomorpha</taxon>
        <taxon>Muroidea</taxon>
        <taxon>Muridae</taxon>
        <taxon>Murinae</taxon>
        <taxon>Mus</taxon>
        <taxon>Mus</taxon>
    </lineage>
</organism>
<dbReference type="EC" id="2.3.2.27" evidence="1"/>
<dbReference type="EMBL" id="AK129184">
    <property type="protein sequence ID" value="BAC97994.1"/>
    <property type="status" value="ALT_INIT"/>
    <property type="molecule type" value="mRNA"/>
</dbReference>
<dbReference type="EMBL" id="AK042654">
    <property type="protein sequence ID" value="BAC31322.1"/>
    <property type="molecule type" value="mRNA"/>
</dbReference>
<dbReference type="EMBL" id="AK089805">
    <property type="protein sequence ID" value="BAC40966.1"/>
    <property type="molecule type" value="mRNA"/>
</dbReference>
<dbReference type="EMBL" id="AK154982">
    <property type="protein sequence ID" value="BAE32971.1"/>
    <property type="molecule type" value="mRNA"/>
</dbReference>
<dbReference type="EMBL" id="AK171462">
    <property type="protein sequence ID" value="BAE42468.1"/>
    <property type="molecule type" value="mRNA"/>
</dbReference>
<dbReference type="EMBL" id="BC038348">
    <property type="protein sequence ID" value="AAH38348.1"/>
    <property type="molecule type" value="mRNA"/>
</dbReference>
<dbReference type="CCDS" id="CCDS21871.1"/>
<dbReference type="RefSeq" id="NP_758485.2">
    <property type="nucleotide sequence ID" value="NM_172281.3"/>
</dbReference>
<dbReference type="SMR" id="Q3U319"/>
<dbReference type="BioGRID" id="231471">
    <property type="interactions" value="9"/>
</dbReference>
<dbReference type="FunCoup" id="Q3U319">
    <property type="interactions" value="3663"/>
</dbReference>
<dbReference type="IntAct" id="Q3U319">
    <property type="interactions" value="2"/>
</dbReference>
<dbReference type="MINT" id="Q3U319"/>
<dbReference type="STRING" id="10090.ENSMUSP00000146310"/>
<dbReference type="GlyGen" id="Q3U319">
    <property type="glycosylation" value="1 site"/>
</dbReference>
<dbReference type="iPTMnet" id="Q3U319"/>
<dbReference type="PhosphoSitePlus" id="Q3U319"/>
<dbReference type="SwissPalm" id="Q3U319"/>
<dbReference type="jPOST" id="Q3U319"/>
<dbReference type="PaxDb" id="10090-ENSMUSP00000033088"/>
<dbReference type="PeptideAtlas" id="Q3U319"/>
<dbReference type="ProteomicsDB" id="273801"/>
<dbReference type="Pumba" id="Q3U319"/>
<dbReference type="Antibodypedia" id="13809">
    <property type="antibodies" value="272 antibodies from 32 providers"/>
</dbReference>
<dbReference type="DNASU" id="233900"/>
<dbReference type="Ensembl" id="ENSMUST00000205694.2">
    <property type="protein sequence ID" value="ENSMUSP00000146310.2"/>
    <property type="gene ID" value="ENSMUSG00000030816.9"/>
</dbReference>
<dbReference type="GeneID" id="233900"/>
<dbReference type="KEGG" id="mmu:233900"/>
<dbReference type="UCSC" id="uc009jwe.2">
    <property type="organism name" value="mouse"/>
</dbReference>
<dbReference type="AGR" id="MGI:2142048"/>
<dbReference type="CTD" id="9810"/>
<dbReference type="MGI" id="MGI:2142048">
    <property type="gene designation" value="Rnf40"/>
</dbReference>
<dbReference type="VEuPathDB" id="HostDB:ENSMUSG00000030816"/>
<dbReference type="eggNOG" id="KOG0978">
    <property type="taxonomic scope" value="Eukaryota"/>
</dbReference>
<dbReference type="GeneTree" id="ENSGT00390000002866"/>
<dbReference type="HOGENOM" id="CLU_002640_0_0_1"/>
<dbReference type="InParanoid" id="Q3U319"/>
<dbReference type="OMA" id="THIEIMT"/>
<dbReference type="OrthoDB" id="10266039at2759"/>
<dbReference type="PhylomeDB" id="Q3U319"/>
<dbReference type="TreeFam" id="TF323183"/>
<dbReference type="Reactome" id="R-MMU-8866654">
    <property type="pathway name" value="E3 ubiquitin ligases ubiquitinate target proteins"/>
</dbReference>
<dbReference type="UniPathway" id="UPA00143"/>
<dbReference type="BioGRID-ORCS" id="233900">
    <property type="hits" value="31 hits in 85 CRISPR screens"/>
</dbReference>
<dbReference type="PRO" id="PR:Q3U319"/>
<dbReference type="Proteomes" id="UP000000589">
    <property type="component" value="Chromosome 7"/>
</dbReference>
<dbReference type="RNAct" id="Q3U319">
    <property type="molecule type" value="protein"/>
</dbReference>
<dbReference type="Bgee" id="ENSMUSG00000030816">
    <property type="expression patterns" value="Expressed in granulocyte and 173 other cell types or tissues"/>
</dbReference>
<dbReference type="ExpressionAtlas" id="Q3U319">
    <property type="expression patterns" value="baseline and differential"/>
</dbReference>
<dbReference type="GO" id="GO:0033503">
    <property type="term" value="C:HULC complex"/>
    <property type="evidence" value="ECO:0000250"/>
    <property type="project" value="UniProtKB"/>
</dbReference>
<dbReference type="GO" id="GO:0005654">
    <property type="term" value="C:nucleoplasm"/>
    <property type="evidence" value="ECO:0007669"/>
    <property type="project" value="Ensembl"/>
</dbReference>
<dbReference type="GO" id="GO:0003730">
    <property type="term" value="F:mRNA 3'-UTR binding"/>
    <property type="evidence" value="ECO:0007669"/>
    <property type="project" value="Ensembl"/>
</dbReference>
<dbReference type="GO" id="GO:0042803">
    <property type="term" value="F:protein homodimerization activity"/>
    <property type="evidence" value="ECO:0007669"/>
    <property type="project" value="Ensembl"/>
</dbReference>
<dbReference type="GO" id="GO:0031625">
    <property type="term" value="F:ubiquitin protein ligase binding"/>
    <property type="evidence" value="ECO:0007669"/>
    <property type="project" value="Ensembl"/>
</dbReference>
<dbReference type="GO" id="GO:0004842">
    <property type="term" value="F:ubiquitin-protein transferase activity"/>
    <property type="evidence" value="ECO:0007669"/>
    <property type="project" value="Ensembl"/>
</dbReference>
<dbReference type="GO" id="GO:0008270">
    <property type="term" value="F:zinc ion binding"/>
    <property type="evidence" value="ECO:0007669"/>
    <property type="project" value="UniProtKB-KW"/>
</dbReference>
<dbReference type="GO" id="GO:0006325">
    <property type="term" value="P:chromatin organization"/>
    <property type="evidence" value="ECO:0007669"/>
    <property type="project" value="UniProtKB-KW"/>
</dbReference>
<dbReference type="GO" id="GO:0045944">
    <property type="term" value="P:positive regulation of transcription by RNA polymerase II"/>
    <property type="evidence" value="ECO:0007669"/>
    <property type="project" value="Ensembl"/>
</dbReference>
<dbReference type="GO" id="GO:0016567">
    <property type="term" value="P:protein ubiquitination"/>
    <property type="evidence" value="ECO:0007669"/>
    <property type="project" value="UniProtKB-UniPathway"/>
</dbReference>
<dbReference type="CDD" id="cd16815">
    <property type="entry name" value="RING-HC_RNF40"/>
    <property type="match status" value="1"/>
</dbReference>
<dbReference type="FunFam" id="3.30.40.10:FF:000040">
    <property type="entry name" value="E3 ubiquitin protein ligase"/>
    <property type="match status" value="1"/>
</dbReference>
<dbReference type="Gene3D" id="3.30.40.10">
    <property type="entry name" value="Zinc/RING finger domain, C3HC4 (zinc finger)"/>
    <property type="match status" value="1"/>
</dbReference>
<dbReference type="InterPro" id="IPR013956">
    <property type="entry name" value="E3_ubiquit_lig_Bre1"/>
</dbReference>
<dbReference type="InterPro" id="IPR018957">
    <property type="entry name" value="Znf_C3HC4_RING-type"/>
</dbReference>
<dbReference type="InterPro" id="IPR001841">
    <property type="entry name" value="Znf_RING"/>
</dbReference>
<dbReference type="InterPro" id="IPR013083">
    <property type="entry name" value="Znf_RING/FYVE/PHD"/>
</dbReference>
<dbReference type="InterPro" id="IPR017907">
    <property type="entry name" value="Znf_RING_CS"/>
</dbReference>
<dbReference type="PANTHER" id="PTHR23163:SF4">
    <property type="entry name" value="E3 UBIQUITIN-PROTEIN LIGASE BRE1B"/>
    <property type="match status" value="1"/>
</dbReference>
<dbReference type="PANTHER" id="PTHR23163">
    <property type="entry name" value="RING FINGER PROTEIN-RELATED"/>
    <property type="match status" value="1"/>
</dbReference>
<dbReference type="Pfam" id="PF00097">
    <property type="entry name" value="zf-C3HC4"/>
    <property type="match status" value="1"/>
</dbReference>
<dbReference type="SMART" id="SM00184">
    <property type="entry name" value="RING"/>
    <property type="match status" value="1"/>
</dbReference>
<dbReference type="SUPFAM" id="SSF57850">
    <property type="entry name" value="RING/U-box"/>
    <property type="match status" value="1"/>
</dbReference>
<dbReference type="PROSITE" id="PS00518">
    <property type="entry name" value="ZF_RING_1"/>
    <property type="match status" value="1"/>
</dbReference>
<dbReference type="PROSITE" id="PS50089">
    <property type="entry name" value="ZF_RING_2"/>
    <property type="match status" value="1"/>
</dbReference>
<evidence type="ECO:0000250" key="1">
    <source>
        <dbReference type="UniProtKB" id="O75150"/>
    </source>
</evidence>
<evidence type="ECO:0000250" key="2">
    <source>
        <dbReference type="UniProtKB" id="Q5VTR2"/>
    </source>
</evidence>
<evidence type="ECO:0000255" key="3"/>
<evidence type="ECO:0000255" key="4">
    <source>
        <dbReference type="PROSITE-ProRule" id="PRU00175"/>
    </source>
</evidence>
<evidence type="ECO:0000256" key="5">
    <source>
        <dbReference type="SAM" id="MobiDB-lite"/>
    </source>
</evidence>
<evidence type="ECO:0000305" key="6"/>
<evidence type="ECO:0007744" key="7">
    <source>
    </source>
</evidence>
<evidence type="ECO:0007744" key="8">
    <source>
    </source>
</evidence>
<gene>
    <name type="primary">Rnf40</name>
    <name type="synonym">Bre1b</name>
    <name type="synonym">Kiaa0661</name>
</gene>
<reference key="1">
    <citation type="journal article" date="2003" name="DNA Res.">
        <title>Prediction of the coding sequences of mouse homologues of KIAA gene: III. The complete nucleotide sequences of 500 mouse KIAA-homologous cDNAs identified by screening of terminal sequences of cDNA clones randomly sampled from size-fractionated libraries.</title>
        <authorList>
            <person name="Okazaki N."/>
            <person name="Kikuno R."/>
            <person name="Ohara R."/>
            <person name="Inamoto S."/>
            <person name="Koseki H."/>
            <person name="Hiraoka S."/>
            <person name="Saga Y."/>
            <person name="Nagase T."/>
            <person name="Ohara O."/>
            <person name="Koga H."/>
        </authorList>
    </citation>
    <scope>NUCLEOTIDE SEQUENCE [LARGE SCALE MRNA]</scope>
    <source>
        <tissue>Embryonic tail</tissue>
    </source>
</reference>
<reference key="2">
    <citation type="journal article" date="2005" name="Science">
        <title>The transcriptional landscape of the mammalian genome.</title>
        <authorList>
            <person name="Carninci P."/>
            <person name="Kasukawa T."/>
            <person name="Katayama S."/>
            <person name="Gough J."/>
            <person name="Frith M.C."/>
            <person name="Maeda N."/>
            <person name="Oyama R."/>
            <person name="Ravasi T."/>
            <person name="Lenhard B."/>
            <person name="Wells C."/>
            <person name="Kodzius R."/>
            <person name="Shimokawa K."/>
            <person name="Bajic V.B."/>
            <person name="Brenner S.E."/>
            <person name="Batalov S."/>
            <person name="Forrest A.R."/>
            <person name="Zavolan M."/>
            <person name="Davis M.J."/>
            <person name="Wilming L.G."/>
            <person name="Aidinis V."/>
            <person name="Allen J.E."/>
            <person name="Ambesi-Impiombato A."/>
            <person name="Apweiler R."/>
            <person name="Aturaliya R.N."/>
            <person name="Bailey T.L."/>
            <person name="Bansal M."/>
            <person name="Baxter L."/>
            <person name="Beisel K.W."/>
            <person name="Bersano T."/>
            <person name="Bono H."/>
            <person name="Chalk A.M."/>
            <person name="Chiu K.P."/>
            <person name="Choudhary V."/>
            <person name="Christoffels A."/>
            <person name="Clutterbuck D.R."/>
            <person name="Crowe M.L."/>
            <person name="Dalla E."/>
            <person name="Dalrymple B.P."/>
            <person name="de Bono B."/>
            <person name="Della Gatta G."/>
            <person name="di Bernardo D."/>
            <person name="Down T."/>
            <person name="Engstrom P."/>
            <person name="Fagiolini M."/>
            <person name="Faulkner G."/>
            <person name="Fletcher C.F."/>
            <person name="Fukushima T."/>
            <person name="Furuno M."/>
            <person name="Futaki S."/>
            <person name="Gariboldi M."/>
            <person name="Georgii-Hemming P."/>
            <person name="Gingeras T.R."/>
            <person name="Gojobori T."/>
            <person name="Green R.E."/>
            <person name="Gustincich S."/>
            <person name="Harbers M."/>
            <person name="Hayashi Y."/>
            <person name="Hensch T.K."/>
            <person name="Hirokawa N."/>
            <person name="Hill D."/>
            <person name="Huminiecki L."/>
            <person name="Iacono M."/>
            <person name="Ikeo K."/>
            <person name="Iwama A."/>
            <person name="Ishikawa T."/>
            <person name="Jakt M."/>
            <person name="Kanapin A."/>
            <person name="Katoh M."/>
            <person name="Kawasawa Y."/>
            <person name="Kelso J."/>
            <person name="Kitamura H."/>
            <person name="Kitano H."/>
            <person name="Kollias G."/>
            <person name="Krishnan S.P."/>
            <person name="Kruger A."/>
            <person name="Kummerfeld S.K."/>
            <person name="Kurochkin I.V."/>
            <person name="Lareau L.F."/>
            <person name="Lazarevic D."/>
            <person name="Lipovich L."/>
            <person name="Liu J."/>
            <person name="Liuni S."/>
            <person name="McWilliam S."/>
            <person name="Madan Babu M."/>
            <person name="Madera M."/>
            <person name="Marchionni L."/>
            <person name="Matsuda H."/>
            <person name="Matsuzawa S."/>
            <person name="Miki H."/>
            <person name="Mignone F."/>
            <person name="Miyake S."/>
            <person name="Morris K."/>
            <person name="Mottagui-Tabar S."/>
            <person name="Mulder N."/>
            <person name="Nakano N."/>
            <person name="Nakauchi H."/>
            <person name="Ng P."/>
            <person name="Nilsson R."/>
            <person name="Nishiguchi S."/>
            <person name="Nishikawa S."/>
            <person name="Nori F."/>
            <person name="Ohara O."/>
            <person name="Okazaki Y."/>
            <person name="Orlando V."/>
            <person name="Pang K.C."/>
            <person name="Pavan W.J."/>
            <person name="Pavesi G."/>
            <person name="Pesole G."/>
            <person name="Petrovsky N."/>
            <person name="Piazza S."/>
            <person name="Reed J."/>
            <person name="Reid J.F."/>
            <person name="Ring B.Z."/>
            <person name="Ringwald M."/>
            <person name="Rost B."/>
            <person name="Ruan Y."/>
            <person name="Salzberg S.L."/>
            <person name="Sandelin A."/>
            <person name="Schneider C."/>
            <person name="Schoenbach C."/>
            <person name="Sekiguchi K."/>
            <person name="Semple C.A."/>
            <person name="Seno S."/>
            <person name="Sessa L."/>
            <person name="Sheng Y."/>
            <person name="Shibata Y."/>
            <person name="Shimada H."/>
            <person name="Shimada K."/>
            <person name="Silva D."/>
            <person name="Sinclair B."/>
            <person name="Sperling S."/>
            <person name="Stupka E."/>
            <person name="Sugiura K."/>
            <person name="Sultana R."/>
            <person name="Takenaka Y."/>
            <person name="Taki K."/>
            <person name="Tammoja K."/>
            <person name="Tan S.L."/>
            <person name="Tang S."/>
            <person name="Taylor M.S."/>
            <person name="Tegner J."/>
            <person name="Teichmann S.A."/>
            <person name="Ueda H.R."/>
            <person name="van Nimwegen E."/>
            <person name="Verardo R."/>
            <person name="Wei C.L."/>
            <person name="Yagi K."/>
            <person name="Yamanishi H."/>
            <person name="Zabarovsky E."/>
            <person name="Zhu S."/>
            <person name="Zimmer A."/>
            <person name="Hide W."/>
            <person name="Bult C."/>
            <person name="Grimmond S.M."/>
            <person name="Teasdale R.D."/>
            <person name="Liu E.T."/>
            <person name="Brusic V."/>
            <person name="Quackenbush J."/>
            <person name="Wahlestedt C."/>
            <person name="Mattick J.S."/>
            <person name="Hume D.A."/>
            <person name="Kai C."/>
            <person name="Sasaki D."/>
            <person name="Tomaru Y."/>
            <person name="Fukuda S."/>
            <person name="Kanamori-Katayama M."/>
            <person name="Suzuki M."/>
            <person name="Aoki J."/>
            <person name="Arakawa T."/>
            <person name="Iida J."/>
            <person name="Imamura K."/>
            <person name="Itoh M."/>
            <person name="Kato T."/>
            <person name="Kawaji H."/>
            <person name="Kawagashira N."/>
            <person name="Kawashima T."/>
            <person name="Kojima M."/>
            <person name="Kondo S."/>
            <person name="Konno H."/>
            <person name="Nakano K."/>
            <person name="Ninomiya N."/>
            <person name="Nishio T."/>
            <person name="Okada M."/>
            <person name="Plessy C."/>
            <person name="Shibata K."/>
            <person name="Shiraki T."/>
            <person name="Suzuki S."/>
            <person name="Tagami M."/>
            <person name="Waki K."/>
            <person name="Watahiki A."/>
            <person name="Okamura-Oho Y."/>
            <person name="Suzuki H."/>
            <person name="Kawai J."/>
            <person name="Hayashizaki Y."/>
        </authorList>
    </citation>
    <scope>NUCLEOTIDE SEQUENCE [LARGE SCALE MRNA]</scope>
    <source>
        <strain>C57BL/6J</strain>
        <strain>NOD</strain>
        <tissue>Cerebellum</tissue>
        <tissue>Spleen</tissue>
    </source>
</reference>
<reference key="3">
    <citation type="journal article" date="2004" name="Genome Res.">
        <title>The status, quality, and expansion of the NIH full-length cDNA project: the Mammalian Gene Collection (MGC).</title>
        <authorList>
            <consortium name="The MGC Project Team"/>
        </authorList>
    </citation>
    <scope>NUCLEOTIDE SEQUENCE [LARGE SCALE MRNA]</scope>
    <source>
        <strain>FVB/N</strain>
        <tissue>Salivary gland</tissue>
    </source>
</reference>
<reference key="4">
    <citation type="journal article" date="2010" name="Cell">
        <title>A tissue-specific atlas of mouse protein phosphorylation and expression.</title>
        <authorList>
            <person name="Huttlin E.L."/>
            <person name="Jedrychowski M.P."/>
            <person name="Elias J.E."/>
            <person name="Goswami T."/>
            <person name="Rad R."/>
            <person name="Beausoleil S.A."/>
            <person name="Villen J."/>
            <person name="Haas W."/>
            <person name="Sowa M.E."/>
            <person name="Gygi S.P."/>
        </authorList>
    </citation>
    <scope>PHOSPHORYLATION [LARGE SCALE ANALYSIS] AT SER-584 AND SER-585</scope>
    <scope>IDENTIFICATION BY MASS SPECTROMETRY [LARGE SCALE ANALYSIS]</scope>
    <source>
        <tissue>Brain</tissue>
        <tissue>Heart</tissue>
        <tissue>Kidney</tissue>
        <tissue>Liver</tissue>
        <tissue>Lung</tissue>
        <tissue>Pancreas</tissue>
        <tissue>Spleen</tissue>
        <tissue>Testis</tissue>
    </source>
</reference>
<reference key="5">
    <citation type="journal article" date="2013" name="Mol. Cell">
        <title>SIRT5-mediated lysine desuccinylation impacts diverse metabolic pathways.</title>
        <authorList>
            <person name="Park J."/>
            <person name="Chen Y."/>
            <person name="Tishkoff D.X."/>
            <person name="Peng C."/>
            <person name="Tan M."/>
            <person name="Dai L."/>
            <person name="Xie Z."/>
            <person name="Zhang Y."/>
            <person name="Zwaans B.M."/>
            <person name="Skinner M.E."/>
            <person name="Lombard D.B."/>
            <person name="Zhao Y."/>
        </authorList>
    </citation>
    <scope>ACETYLATION [LARGE SCALE ANALYSIS] AT LYS-20 AND LYS-517</scope>
    <scope>IDENTIFICATION BY MASS SPECTROMETRY [LARGE SCALE ANALYSIS]</scope>
    <source>
        <tissue>Embryonic fibroblast</tissue>
    </source>
</reference>